<sequence>MPALPPVYTPSGAPSSVHAPPAVPPVPVPTQPLRSEYQTSNDACIKRLEELNIAPAAKLYPTPTEPGKCGVEAEIQTNVFGIEMHQDSLFYQYSVNITTELKNGKEVTFTKKGKDDFVVTERHDKCCAILFRALGDYEEFFKTSDSCLIYDGQSILFSNVDLFQGFREGAVKTKYMQLDGGEMDHKDLKSLPCIKLEVFPTKNPAVKFTREAVARRATDSNLDSVSLAYQQILELALTQPCLRNTARYVVFDHGKMFFIDPLGEGFEKCDVVDVGDGKQVVPGLKKTINFIEGPYGRGRSNPSVVIDGMKVAFHKNQPILDKLKEITTQPVEHGLKGLEKDRCAAVIKGLDCYSTYGGRERHHKIEGIHHEGARNARFELNDGGSCTVAQYFEDVYNITLRYPDTNLIVSKERGNINFYPMELLKISSHQRVQIPQLTSAQSQKTTKESAVLPDVRQRLILTGKNAAQISSDNEVLGKMGVSVCEDPLMVKGRSIPAVKLANAEIGANPINVKDNKWRANRFTRPATAPNVWAMYVVGTASTRITLDTLKKFADEFAAMCKSKGVNMPAPADISLIHMDAIESRLYDATKANCTFVFIITDDSITTLHQRYKMIEKDTKMIVQDMKLSKALSVINAGKRLTLENVINKTNVKLGGSNYVFVDAKKQLDSHLIIGVGISAPPAGTKYAMENKGVLNPNVIGYAYNAQHNQEFSGDFVLNSASQDTLAPIEDIVMHSLNEYQKFHDGGLPRRVIVYRTGTSEGNHGSIMAYEIPLARAAMRDFSPDIQLVYIVVSKDHSFRFFKPDLASLASRPQATSSTASRHSAMPAAPKAWDLNIAPGILVDSIVTNPACKQFFLNSHITLQGTAKTPLYTVLADDAKVSMTALEDITYKLCHLHQIVGLPTSLPTPLYVANEYAKRGRNLWNEAVALNNVPTVSGPEADRLKELTKSICYKASGDLTGRRVNA</sequence>
<reference evidence="10" key="1">
    <citation type="journal article" date="1998" name="Science">
        <title>Genome sequence of the nematode C. elegans: a platform for investigating biology.</title>
        <authorList>
            <consortium name="The C. elegans sequencing consortium"/>
        </authorList>
    </citation>
    <scope>NUCLEOTIDE SEQUENCE [LARGE SCALE GENOMIC DNA]</scope>
    <source>
        <strain evidence="10">Bristol N2</strain>
    </source>
</reference>
<reference evidence="9" key="2">
    <citation type="journal article" date="2006" name="Cell">
        <title>Analysis of the C. elegans Argonaute family reveals that distinct Argonautes act sequentially during RNAi.</title>
        <authorList>
            <person name="Yigit E."/>
            <person name="Batista P.J."/>
            <person name="Bei Y."/>
            <person name="Pang K.M."/>
            <person name="Chen C.C."/>
            <person name="Tolia N.H."/>
            <person name="Joshua-Tor L."/>
            <person name="Mitani S."/>
            <person name="Simard M.J."/>
            <person name="Mello C.C."/>
        </authorList>
    </citation>
    <scope>FUNCTION</scope>
</reference>
<reference evidence="9" key="3">
    <citation type="journal article" date="2018" name="Cell Rep.">
        <title>A Cytoplasmic Argonaute Protein Promotes the Inheritance of RNAi.</title>
        <authorList>
            <person name="Xu F."/>
            <person name="Feng X."/>
            <person name="Chen X."/>
            <person name="Weng C."/>
            <person name="Yan Q."/>
            <person name="Xu T."/>
            <person name="Hong M."/>
            <person name="Guang S."/>
        </authorList>
    </citation>
    <scope>FUNCTION</scope>
    <scope>SUBCELLULAR LOCATION</scope>
    <scope>TISSUE SPECIFICITY</scope>
    <scope>DEVELOPMENTAL STAGE</scope>
</reference>
<reference evidence="9" key="4">
    <citation type="journal article" date="2018" name="Nature">
        <title>Spatiotemporal regulation of liquid-like condensates in epigenetic inheritance.</title>
        <authorList>
            <person name="Wan G."/>
            <person name="Fields B.D."/>
            <person name="Spracklin G."/>
            <person name="Shukla A."/>
            <person name="Phillips C.M."/>
            <person name="Kennedy S."/>
        </authorList>
    </citation>
    <scope>FUNCTION</scope>
    <scope>INTERACTION WITH ZNFX-1</scope>
    <scope>SUBCELLULAR LOCATION</scope>
    <scope>TISSUE SPECIFICITY</scope>
    <scope>DEVELOPMENTAL STAGE</scope>
</reference>
<reference evidence="9" key="5">
    <citation type="journal article" date="2019" name="Cell Death Differ.">
        <title>MINA-1 and WAGO-4 are part of regulatory network coordinating germ cell death and RNAi in C. elegans.</title>
        <authorList>
            <person name="Sendoel A."/>
            <person name="Subasic D."/>
            <person name="Ducoli L."/>
            <person name="Keller M."/>
            <person name="Michel E."/>
            <person name="Kohler I."/>
            <person name="Singh K.D."/>
            <person name="Zheng X."/>
            <person name="Bruemmer A."/>
            <person name="Imig J."/>
            <person name="Kishore S."/>
            <person name="Wu Y."/>
            <person name="Kanitz A."/>
            <person name="Kaech A."/>
            <person name="Mittal N."/>
            <person name="Matia-Gonzalez A.M."/>
            <person name="Gerber A.P."/>
            <person name="Zavolan M."/>
            <person name="Aebersold R."/>
            <person name="Hall J."/>
            <person name="Allain F.H."/>
            <person name="Hengartner M.O."/>
        </authorList>
    </citation>
    <scope>FUNCTION</scope>
    <scope>INTERACTION WITH MINA-1</scope>
    <scope>SUBCELLULAR LOCATION</scope>
    <scope>TISSUE SPECIFICITY</scope>
    <scope>DEVELOPMENTAL STAGE</scope>
</reference>
<keyword id="KW-0963">Cytoplasm</keyword>
<keyword id="KW-1185">Reference proteome</keyword>
<keyword id="KW-0694">RNA-binding</keyword>
<keyword id="KW-0943">RNA-mediated gene silencing</keyword>
<dbReference type="EMBL" id="BX284602">
    <property type="protein sequence ID" value="CAB04524.1"/>
    <property type="molecule type" value="Genomic_DNA"/>
</dbReference>
<dbReference type="PIR" id="T22933">
    <property type="entry name" value="T22933"/>
</dbReference>
<dbReference type="RefSeq" id="NP_496751.1">
    <property type="nucleotide sequence ID" value="NM_064350.6"/>
</dbReference>
<dbReference type="SMR" id="O62275"/>
<dbReference type="FunCoup" id="O62275">
    <property type="interactions" value="15"/>
</dbReference>
<dbReference type="IntAct" id="O62275">
    <property type="interactions" value="1"/>
</dbReference>
<dbReference type="STRING" id="6239.F58G1.1.1"/>
<dbReference type="PaxDb" id="6239-F58G1.1"/>
<dbReference type="PeptideAtlas" id="O62275"/>
<dbReference type="EnsemblMetazoa" id="F58G1.1.1">
    <property type="protein sequence ID" value="F58G1.1.1"/>
    <property type="gene ID" value="WBGene00010263"/>
</dbReference>
<dbReference type="GeneID" id="174932"/>
<dbReference type="KEGG" id="cel:CELE_F58G1.1"/>
<dbReference type="UCSC" id="F58G1.1">
    <property type="organism name" value="c. elegans"/>
</dbReference>
<dbReference type="AGR" id="WB:WBGene00010263"/>
<dbReference type="CTD" id="174932"/>
<dbReference type="WormBase" id="F58G1.1">
    <property type="protein sequence ID" value="CE17921"/>
    <property type="gene ID" value="WBGene00010263"/>
    <property type="gene designation" value="wago-4"/>
</dbReference>
<dbReference type="eggNOG" id="KOG1041">
    <property type="taxonomic scope" value="Eukaryota"/>
</dbReference>
<dbReference type="GeneTree" id="ENSGT00970000196328"/>
<dbReference type="HOGENOM" id="CLU_310185_0_0_1"/>
<dbReference type="InParanoid" id="O62275"/>
<dbReference type="OMA" id="AWDLNIA"/>
<dbReference type="OrthoDB" id="5868801at2759"/>
<dbReference type="PhylomeDB" id="O62275"/>
<dbReference type="Reactome" id="R-CEL-203927">
    <property type="pathway name" value="MicroRNA (miRNA) biogenesis"/>
</dbReference>
<dbReference type="Reactome" id="R-CEL-426486">
    <property type="pathway name" value="Small interfering RNA (siRNA) biogenesis"/>
</dbReference>
<dbReference type="Reactome" id="R-CEL-5578749">
    <property type="pathway name" value="Transcriptional regulation by small RNAs"/>
</dbReference>
<dbReference type="CD-CODE" id="060EE9EF">
    <property type="entry name" value="Z-granule"/>
</dbReference>
<dbReference type="CD-CODE" id="73A75392">
    <property type="entry name" value="P-granule"/>
</dbReference>
<dbReference type="PRO" id="PR:O62275"/>
<dbReference type="Proteomes" id="UP000001940">
    <property type="component" value="Chromosome II"/>
</dbReference>
<dbReference type="Bgee" id="WBGene00010263">
    <property type="expression patterns" value="Expressed in adult organism and 3 other cell types or tissues"/>
</dbReference>
<dbReference type="GO" id="GO:0005737">
    <property type="term" value="C:cytoplasm"/>
    <property type="evidence" value="ECO:0000318"/>
    <property type="project" value="GO_Central"/>
</dbReference>
<dbReference type="GO" id="GO:0036464">
    <property type="term" value="C:cytoplasmic ribonucleoprotein granule"/>
    <property type="evidence" value="ECO:0000318"/>
    <property type="project" value="GO_Central"/>
</dbReference>
<dbReference type="GO" id="GO:0005634">
    <property type="term" value="C:nucleus"/>
    <property type="evidence" value="ECO:0000318"/>
    <property type="project" value="GO_Central"/>
</dbReference>
<dbReference type="GO" id="GO:0048471">
    <property type="term" value="C:perinuclear region of cytoplasm"/>
    <property type="evidence" value="ECO:0007669"/>
    <property type="project" value="UniProtKB-SubCell"/>
</dbReference>
<dbReference type="GO" id="GO:0016442">
    <property type="term" value="C:RISC complex"/>
    <property type="evidence" value="ECO:0000318"/>
    <property type="project" value="GO_Central"/>
</dbReference>
<dbReference type="GO" id="GO:0035198">
    <property type="term" value="F:miRNA binding"/>
    <property type="evidence" value="ECO:0000318"/>
    <property type="project" value="GO_Central"/>
</dbReference>
<dbReference type="GO" id="GO:0004521">
    <property type="term" value="F:RNA endonuclease activity"/>
    <property type="evidence" value="ECO:0000318"/>
    <property type="project" value="GO_Central"/>
</dbReference>
<dbReference type="GO" id="GO:0003727">
    <property type="term" value="F:single-stranded RNA binding"/>
    <property type="evidence" value="ECO:0000318"/>
    <property type="project" value="GO_Central"/>
</dbReference>
<dbReference type="GO" id="GO:0060966">
    <property type="term" value="P:regulation of gene silencing by regulatory ncRNA"/>
    <property type="evidence" value="ECO:0000315"/>
    <property type="project" value="UniProtKB"/>
</dbReference>
<dbReference type="GO" id="GO:0031048">
    <property type="term" value="P:regulatory ncRNA-mediated heterochromatin formation"/>
    <property type="evidence" value="ECO:0000316"/>
    <property type="project" value="WormBase"/>
</dbReference>
<dbReference type="GO" id="GO:0035194">
    <property type="term" value="P:regulatory ncRNA-mediated post-transcriptional gene silencing"/>
    <property type="evidence" value="ECO:0000318"/>
    <property type="project" value="GO_Central"/>
</dbReference>
<dbReference type="CDD" id="cd02846">
    <property type="entry name" value="PAZ_argonaute_like"/>
    <property type="match status" value="1"/>
</dbReference>
<dbReference type="FunFam" id="3.30.420.10:FF:000298">
    <property type="entry name" value="Argonaute protein wago-1"/>
    <property type="match status" value="1"/>
</dbReference>
<dbReference type="FunFam" id="2.170.260.10:FF:000008">
    <property type="entry name" value="Protein argonaute 7"/>
    <property type="match status" value="1"/>
</dbReference>
<dbReference type="Gene3D" id="3.40.50.2300">
    <property type="match status" value="1"/>
</dbReference>
<dbReference type="Gene3D" id="2.170.260.10">
    <property type="entry name" value="paz domain"/>
    <property type="match status" value="1"/>
</dbReference>
<dbReference type="Gene3D" id="3.30.420.10">
    <property type="entry name" value="Ribonuclease H-like superfamily/Ribonuclease H"/>
    <property type="match status" value="1"/>
</dbReference>
<dbReference type="InterPro" id="IPR003100">
    <property type="entry name" value="PAZ_dom"/>
</dbReference>
<dbReference type="InterPro" id="IPR036085">
    <property type="entry name" value="PAZ_dom_sf"/>
</dbReference>
<dbReference type="InterPro" id="IPR003165">
    <property type="entry name" value="Piwi"/>
</dbReference>
<dbReference type="InterPro" id="IPR012337">
    <property type="entry name" value="RNaseH-like_sf"/>
</dbReference>
<dbReference type="InterPro" id="IPR036397">
    <property type="entry name" value="RNaseH_sf"/>
</dbReference>
<dbReference type="PANTHER" id="PTHR22891">
    <property type="entry name" value="EUKARYOTIC TRANSLATION INITIATION FACTOR 2C"/>
    <property type="match status" value="1"/>
</dbReference>
<dbReference type="Pfam" id="PF02170">
    <property type="entry name" value="PAZ"/>
    <property type="match status" value="1"/>
</dbReference>
<dbReference type="Pfam" id="PF02171">
    <property type="entry name" value="Piwi"/>
    <property type="match status" value="1"/>
</dbReference>
<dbReference type="SMART" id="SM00949">
    <property type="entry name" value="PAZ"/>
    <property type="match status" value="1"/>
</dbReference>
<dbReference type="SMART" id="SM00950">
    <property type="entry name" value="Piwi"/>
    <property type="match status" value="1"/>
</dbReference>
<dbReference type="SUPFAM" id="SSF101690">
    <property type="entry name" value="PAZ domain"/>
    <property type="match status" value="1"/>
</dbReference>
<dbReference type="SUPFAM" id="SSF53098">
    <property type="entry name" value="Ribonuclease H-like"/>
    <property type="match status" value="1"/>
</dbReference>
<dbReference type="PROSITE" id="PS50821">
    <property type="entry name" value="PAZ"/>
    <property type="match status" value="1"/>
</dbReference>
<dbReference type="PROSITE" id="PS50822">
    <property type="entry name" value="PIWI"/>
    <property type="match status" value="1"/>
</dbReference>
<proteinExistence type="evidence at protein level"/>
<protein>
    <recommendedName>
        <fullName evidence="9">Argonaute protein wago-4</fullName>
    </recommendedName>
    <alternativeName>
        <fullName evidence="11">Worm-specific argonaute protein 4</fullName>
    </alternativeName>
</protein>
<comment type="function">
    <text evidence="4 5 6 7">Argonaute protein which is involved in the endogenous small interfering RNA (endo-siRNA) pathway and is required for RNA-mediated gene silencing (RNAi) in the germline (PubMed:17110334, PubMed:29791857, PubMed:30728462). Interacts with secondary 22G-RNAs, which are RNA-dependent RNA polymerase-derived endo-siRNAs, typically 22 nucleotides in length with a 5'guanosine residue (PubMed:29791857). Also interacts with the mRNA targets of 22G-RNAs (PubMed:29791857). Associates with znfx-1 to mediate small RNA-directed transgenerational epigenetic inheritance of both germline- and soma-expressed genes (PubMed:29769721, PubMed:29791857).</text>
</comment>
<comment type="subunit">
    <text evidence="5 7">Interacts with znfx-1; the interaction promotes the transmission of epigenetic information across generations (PubMed:29769721). May interact with mina-1 (PubMed:30728462).</text>
</comment>
<comment type="subcellular location">
    <subcellularLocation>
        <location evidence="5 6 7">Cytoplasm</location>
        <location evidence="5 6 7">Perinuclear region</location>
    </subcellularLocation>
    <subcellularLocation>
        <location evidence="5">Cytoplasmic granule</location>
    </subcellularLocation>
    <subcellularLocation>
        <location evidence="6">Cytoplasm</location>
    </subcellularLocation>
    <text evidence="5">Co-localizes with znfx-1 in P-granules in germline blastomeres until the 100-cell stage (PubMed:29769721). During oocyte maturation, co-localizes with znfx-1 in liquid-like condensates in the cytoplasm called Z granules (PubMed:29769721). Localizes to cytoplasmic P-granules in germline blastomeres.</text>
</comment>
<comment type="tissue specificity">
    <text evidence="5 6 7">Expressed in the hermaphrodite germline and in oocytes (PubMed:29769721, PubMed:29791857, PubMed:30728462). Expressed at a low level in the male germline (PubMed:29791857). Not expressed in the soma of hermaphrodites or males (PubMed:29791857).</text>
</comment>
<comment type="developmental stage">
    <text evidence="5 6 7">Expressed throughout development (PubMed:29769721, PubMed:29791857, PubMed:30728462). Following fertilization, in the zygotes and early embryos, it is expressed in the germline (PubMed:29791857). Evenly distributed in one-cell stage embryos (PubMed:29791857). In early embryos, segregates to germline precursor cells and is expressed in P1-P4 germline cells (PubMed:29769721, PubMed:29791857, PubMed:30728462). Also expressed in the endomesodermal (EMS) precursor cell (PubMed:29791857). Exclusively expressed in Z2 and Z3 larval cells at hatching (PubMed:29791857).</text>
</comment>
<comment type="miscellaneous">
    <text evidence="8">Members of the WAGO (worm-specific argonaute) subfamily lack conserved metal-binding residues found in other argonaute proteins and probably do not cleave target mRNAs directly.</text>
</comment>
<comment type="similarity">
    <text evidence="9">Belongs to the argonaute family. WAGO subfamily.</text>
</comment>
<evidence type="ECO:0000255" key="1">
    <source>
        <dbReference type="PROSITE-ProRule" id="PRU00142"/>
    </source>
</evidence>
<evidence type="ECO:0000255" key="2">
    <source>
        <dbReference type="PROSITE-ProRule" id="PRU00150"/>
    </source>
</evidence>
<evidence type="ECO:0000256" key="3">
    <source>
        <dbReference type="SAM" id="MobiDB-lite"/>
    </source>
</evidence>
<evidence type="ECO:0000269" key="4">
    <source>
    </source>
</evidence>
<evidence type="ECO:0000269" key="5">
    <source>
    </source>
</evidence>
<evidence type="ECO:0000269" key="6">
    <source>
    </source>
</evidence>
<evidence type="ECO:0000269" key="7">
    <source>
    </source>
</evidence>
<evidence type="ECO:0000303" key="8">
    <source>
    </source>
</evidence>
<evidence type="ECO:0000305" key="9"/>
<evidence type="ECO:0000312" key="10">
    <source>
        <dbReference type="Proteomes" id="UP000001940"/>
    </source>
</evidence>
<evidence type="ECO:0000312" key="11">
    <source>
        <dbReference type="WormBase" id="F58G1.1"/>
    </source>
</evidence>
<name>WAGO4_CAEEL</name>
<organism evidence="10">
    <name type="scientific">Caenorhabditis elegans</name>
    <dbReference type="NCBI Taxonomy" id="6239"/>
    <lineage>
        <taxon>Eukaryota</taxon>
        <taxon>Metazoa</taxon>
        <taxon>Ecdysozoa</taxon>
        <taxon>Nematoda</taxon>
        <taxon>Chromadorea</taxon>
        <taxon>Rhabditida</taxon>
        <taxon>Rhabditina</taxon>
        <taxon>Rhabditomorpha</taxon>
        <taxon>Rhabditoidea</taxon>
        <taxon>Rhabditidae</taxon>
        <taxon>Peloderinae</taxon>
        <taxon>Caenorhabditis</taxon>
    </lineage>
</organism>
<gene>
    <name evidence="11" type="primary">wago-4</name>
    <name evidence="11" type="ORF">F58G1.1</name>
</gene>
<accession>O62275</accession>
<feature type="chain" id="PRO_0000448349" description="Argonaute protein wago-4">
    <location>
        <begin position="1"/>
        <end position="965"/>
    </location>
</feature>
<feature type="domain" description="PAZ" evidence="1">
    <location>
        <begin position="318"/>
        <end position="428"/>
    </location>
</feature>
<feature type="domain" description="Piwi" evidence="2">
    <location>
        <begin position="594"/>
        <end position="924"/>
    </location>
</feature>
<feature type="region of interest" description="Disordered" evidence="3">
    <location>
        <begin position="1"/>
        <end position="34"/>
    </location>
</feature>
<feature type="compositionally biased region" description="Low complexity" evidence="3">
    <location>
        <begin position="10"/>
        <end position="20"/>
    </location>
</feature>
<feature type="compositionally biased region" description="Pro residues" evidence="3">
    <location>
        <begin position="21"/>
        <end position="30"/>
    </location>
</feature>